<dbReference type="EMBL" id="CP001150">
    <property type="protein sequence ID" value="ACM00231.1"/>
    <property type="molecule type" value="Genomic_DNA"/>
</dbReference>
<dbReference type="RefSeq" id="WP_012643671.1">
    <property type="nucleotide sequence ID" value="NC_011963.1"/>
</dbReference>
<dbReference type="GeneID" id="67445835"/>
<dbReference type="KEGG" id="rsk:RSKD131_0371"/>
<dbReference type="HOGENOM" id="CLU_164736_0_0_5"/>
<dbReference type="HAMAP" id="MF_00827">
    <property type="entry name" value="UPF0386"/>
    <property type="match status" value="1"/>
</dbReference>
<dbReference type="InterPro" id="IPR018654">
    <property type="entry name" value="YjhX_toxin"/>
</dbReference>
<dbReference type="NCBIfam" id="NF010240">
    <property type="entry name" value="PRK13687.1"/>
    <property type="match status" value="1"/>
</dbReference>
<dbReference type="Pfam" id="PF09857">
    <property type="entry name" value="YjhX_toxin"/>
    <property type="match status" value="1"/>
</dbReference>
<accession>B9KN19</accession>
<name>Y371_CERSK</name>
<protein>
    <recommendedName>
        <fullName evidence="1">UPF0386 protein RSKD131_0371</fullName>
    </recommendedName>
</protein>
<proteinExistence type="inferred from homology"/>
<gene>
    <name type="ordered locus">RSKD131_0371</name>
</gene>
<feature type="chain" id="PRO_1000148771" description="UPF0386 protein RSKD131_0371">
    <location>
        <begin position="1"/>
        <end position="87"/>
    </location>
</feature>
<organism>
    <name type="scientific">Cereibacter sphaeroides (strain KD131 / KCTC 12085)</name>
    <name type="common">Rhodobacter sphaeroides</name>
    <dbReference type="NCBI Taxonomy" id="557760"/>
    <lineage>
        <taxon>Bacteria</taxon>
        <taxon>Pseudomonadati</taxon>
        <taxon>Pseudomonadota</taxon>
        <taxon>Alphaproteobacteria</taxon>
        <taxon>Rhodobacterales</taxon>
        <taxon>Paracoccaceae</taxon>
        <taxon>Cereibacter</taxon>
    </lineage>
</organism>
<evidence type="ECO:0000255" key="1">
    <source>
        <dbReference type="HAMAP-Rule" id="MF_00827"/>
    </source>
</evidence>
<reference key="1">
    <citation type="journal article" date="2009" name="J. Bacteriol.">
        <title>Complete genome sequence of Rhodobacter sphaeroides KD131.</title>
        <authorList>
            <person name="Lim S.-K."/>
            <person name="Kim S.J."/>
            <person name="Cha S.H."/>
            <person name="Oh Y.-K."/>
            <person name="Rhee H.-J."/>
            <person name="Kim M.-S."/>
            <person name="Lee J.K."/>
        </authorList>
    </citation>
    <scope>NUCLEOTIDE SEQUENCE [LARGE SCALE GENOMIC DNA]</scope>
    <source>
        <strain>KD131 / KCTC 12085</strain>
    </source>
</reference>
<sequence length="87" mass="9979">MNISRNEQRALHVLALGGRILHERDDRRKITAVTCVTREGMILSDFALETFLRLRRKRLIESRSGSPYCISKRGRLSVRAQLDNQGA</sequence>
<comment type="similarity">
    <text evidence="1">Belongs to the UPF0386 family.</text>
</comment>